<reference key="1">
    <citation type="journal article" date="2010" name="Genome Biol. Evol.">
        <title>Continuing evolution of Burkholderia mallei through genome reduction and large-scale rearrangements.</title>
        <authorList>
            <person name="Losada L."/>
            <person name="Ronning C.M."/>
            <person name="DeShazer D."/>
            <person name="Woods D."/>
            <person name="Fedorova N."/>
            <person name="Kim H.S."/>
            <person name="Shabalina S.A."/>
            <person name="Pearson T.R."/>
            <person name="Brinkac L."/>
            <person name="Tan P."/>
            <person name="Nandi T."/>
            <person name="Crabtree J."/>
            <person name="Badger J."/>
            <person name="Beckstrom-Sternberg S."/>
            <person name="Saqib M."/>
            <person name="Schutzer S.E."/>
            <person name="Keim P."/>
            <person name="Nierman W.C."/>
        </authorList>
    </citation>
    <scope>NUCLEOTIDE SEQUENCE [LARGE SCALE GENOMIC DNA]</scope>
    <source>
        <strain>SAVP1</strain>
    </source>
</reference>
<proteinExistence type="inferred from homology"/>
<keyword id="KW-0687">Ribonucleoprotein</keyword>
<keyword id="KW-0689">Ribosomal protein</keyword>
<keyword id="KW-0694">RNA-binding</keyword>
<keyword id="KW-0699">rRNA-binding</keyword>
<comment type="function">
    <text evidence="1">Binds as a heterodimer with protein bS6 to the central domain of the 16S rRNA, where it helps stabilize the platform of the 30S subunit.</text>
</comment>
<comment type="subunit">
    <text evidence="1">Part of the 30S ribosomal subunit. Forms a tight heterodimer with protein bS6.</text>
</comment>
<comment type="similarity">
    <text evidence="1">Belongs to the bacterial ribosomal protein bS18 family.</text>
</comment>
<feature type="chain" id="PRO_1000003462" description="Small ribosomal subunit protein bS18">
    <location>
        <begin position="1"/>
        <end position="91"/>
    </location>
</feature>
<organism>
    <name type="scientific">Burkholderia mallei (strain SAVP1)</name>
    <dbReference type="NCBI Taxonomy" id="320388"/>
    <lineage>
        <taxon>Bacteria</taxon>
        <taxon>Pseudomonadati</taxon>
        <taxon>Pseudomonadota</taxon>
        <taxon>Betaproteobacteria</taxon>
        <taxon>Burkholderiales</taxon>
        <taxon>Burkholderiaceae</taxon>
        <taxon>Burkholderia</taxon>
        <taxon>pseudomallei group</taxon>
    </lineage>
</organism>
<accession>A1V4Q9</accession>
<sequence>MARPTGKKFDKRRQQQNPLFKRKKFCRFTAAGVEQIDYKDTETLKDFIGENGKITPARLTGTKAHYQRQLDTAIKRARFLALLPYTDQHKA</sequence>
<gene>
    <name evidence="1" type="primary">rpsR</name>
    <name type="ordered locus">BMASAVP1_A1893</name>
</gene>
<evidence type="ECO:0000255" key="1">
    <source>
        <dbReference type="HAMAP-Rule" id="MF_00270"/>
    </source>
</evidence>
<evidence type="ECO:0000305" key="2"/>
<name>RS18_BURMS</name>
<dbReference type="EMBL" id="CP000526">
    <property type="protein sequence ID" value="ABM50015.1"/>
    <property type="molecule type" value="Genomic_DNA"/>
</dbReference>
<dbReference type="RefSeq" id="WP_004193360.1">
    <property type="nucleotide sequence ID" value="NC_008785.1"/>
</dbReference>
<dbReference type="SMR" id="A1V4Q9"/>
<dbReference type="GeneID" id="93173028"/>
<dbReference type="KEGG" id="bmv:BMASAVP1_A1893"/>
<dbReference type="HOGENOM" id="CLU_148710_0_3_4"/>
<dbReference type="GO" id="GO:0022627">
    <property type="term" value="C:cytosolic small ribosomal subunit"/>
    <property type="evidence" value="ECO:0007669"/>
    <property type="project" value="TreeGrafter"/>
</dbReference>
<dbReference type="GO" id="GO:0070181">
    <property type="term" value="F:small ribosomal subunit rRNA binding"/>
    <property type="evidence" value="ECO:0007669"/>
    <property type="project" value="TreeGrafter"/>
</dbReference>
<dbReference type="GO" id="GO:0003735">
    <property type="term" value="F:structural constituent of ribosome"/>
    <property type="evidence" value="ECO:0007669"/>
    <property type="project" value="InterPro"/>
</dbReference>
<dbReference type="GO" id="GO:0006412">
    <property type="term" value="P:translation"/>
    <property type="evidence" value="ECO:0007669"/>
    <property type="project" value="UniProtKB-UniRule"/>
</dbReference>
<dbReference type="Gene3D" id="4.10.640.10">
    <property type="entry name" value="Ribosomal protein S18"/>
    <property type="match status" value="1"/>
</dbReference>
<dbReference type="HAMAP" id="MF_00270">
    <property type="entry name" value="Ribosomal_bS18"/>
    <property type="match status" value="1"/>
</dbReference>
<dbReference type="InterPro" id="IPR001648">
    <property type="entry name" value="Ribosomal_bS18"/>
</dbReference>
<dbReference type="InterPro" id="IPR018275">
    <property type="entry name" value="Ribosomal_bS18_CS"/>
</dbReference>
<dbReference type="InterPro" id="IPR036870">
    <property type="entry name" value="Ribosomal_bS18_sf"/>
</dbReference>
<dbReference type="NCBIfam" id="TIGR00165">
    <property type="entry name" value="S18"/>
    <property type="match status" value="1"/>
</dbReference>
<dbReference type="PANTHER" id="PTHR13479">
    <property type="entry name" value="30S RIBOSOMAL PROTEIN S18"/>
    <property type="match status" value="1"/>
</dbReference>
<dbReference type="PANTHER" id="PTHR13479:SF40">
    <property type="entry name" value="SMALL RIBOSOMAL SUBUNIT PROTEIN BS18M"/>
    <property type="match status" value="1"/>
</dbReference>
<dbReference type="Pfam" id="PF01084">
    <property type="entry name" value="Ribosomal_S18"/>
    <property type="match status" value="1"/>
</dbReference>
<dbReference type="PRINTS" id="PR00974">
    <property type="entry name" value="RIBOSOMALS18"/>
</dbReference>
<dbReference type="SUPFAM" id="SSF46911">
    <property type="entry name" value="Ribosomal protein S18"/>
    <property type="match status" value="1"/>
</dbReference>
<dbReference type="PROSITE" id="PS00057">
    <property type="entry name" value="RIBOSOMAL_S18"/>
    <property type="match status" value="1"/>
</dbReference>
<protein>
    <recommendedName>
        <fullName evidence="1">Small ribosomal subunit protein bS18</fullName>
    </recommendedName>
    <alternativeName>
        <fullName evidence="2">30S ribosomal protein S18</fullName>
    </alternativeName>
</protein>